<reference key="1">
    <citation type="journal article" date="2008" name="J. Bacteriol.">
        <title>Genome sequence of Thermofilum pendens reveals an exceptional loss of biosynthetic pathways without genome reduction.</title>
        <authorList>
            <person name="Anderson I."/>
            <person name="Rodriguez J."/>
            <person name="Susanti D."/>
            <person name="Porat I."/>
            <person name="Reich C."/>
            <person name="Ulrich L.E."/>
            <person name="Elkins J.G."/>
            <person name="Mavromatis K."/>
            <person name="Lykidis A."/>
            <person name="Kim E."/>
            <person name="Thompson L.S."/>
            <person name="Nolan M."/>
            <person name="Land M."/>
            <person name="Copeland A."/>
            <person name="Lapidus A."/>
            <person name="Lucas S."/>
            <person name="Detter C."/>
            <person name="Zhulin I.B."/>
            <person name="Olsen G.J."/>
            <person name="Whitman W."/>
            <person name="Mukhopadhyay B."/>
            <person name="Bristow J."/>
            <person name="Kyrpides N."/>
        </authorList>
    </citation>
    <scope>NUCLEOTIDE SEQUENCE [LARGE SCALE GENOMIC DNA]</scope>
    <source>
        <strain>DSM 2475 / Hrk 5</strain>
    </source>
</reference>
<keyword id="KW-0067">ATP-binding</keyword>
<keyword id="KW-0378">Hydrolase</keyword>
<keyword id="KW-0547">Nucleotide-binding</keyword>
<keyword id="KW-1185">Reference proteome</keyword>
<protein>
    <recommendedName>
        <fullName evidence="1">Nucleoside-triphosphatase THEP1</fullName>
        <shortName evidence="1">NTPase THEP1</shortName>
        <ecNumber evidence="1">3.6.1.15</ecNumber>
    </recommendedName>
    <alternativeName>
        <fullName evidence="1">Nucleoside triphosphate phosphohydrolase</fullName>
    </alternativeName>
</protein>
<organism>
    <name type="scientific">Thermofilum pendens (strain DSM 2475 / Hrk 5)</name>
    <dbReference type="NCBI Taxonomy" id="368408"/>
    <lineage>
        <taxon>Archaea</taxon>
        <taxon>Thermoproteota</taxon>
        <taxon>Thermoprotei</taxon>
        <taxon>Thermofilales</taxon>
        <taxon>Thermofilaceae</taxon>
        <taxon>Thermofilum</taxon>
    </lineage>
</organism>
<proteinExistence type="inferred from homology"/>
<comment type="function">
    <text evidence="1">Has nucleotide phosphatase activity towards ATP, GTP, CTP, TTP and UTP. May hydrolyze nucleoside diphosphates with lower efficiency.</text>
</comment>
<comment type="catalytic activity">
    <reaction evidence="1">
        <text>a ribonucleoside 5'-triphosphate + H2O = a ribonucleoside 5'-diphosphate + phosphate + H(+)</text>
        <dbReference type="Rhea" id="RHEA:23680"/>
        <dbReference type="ChEBI" id="CHEBI:15377"/>
        <dbReference type="ChEBI" id="CHEBI:15378"/>
        <dbReference type="ChEBI" id="CHEBI:43474"/>
        <dbReference type="ChEBI" id="CHEBI:57930"/>
        <dbReference type="ChEBI" id="CHEBI:61557"/>
        <dbReference type="EC" id="3.6.1.15"/>
    </reaction>
</comment>
<comment type="similarity">
    <text evidence="1">Belongs to the THEP1 NTPase family.</text>
</comment>
<sequence>MAAKNFLLTGRPGIGKTTCVVKTAELLVSRGVKVGGMVTHEVREGGSRVGFKVRDLLTGREGFLAKVGAGAGPRVGKYVVHVEELEAVGVGAILRAVSEAQVVVIDEIGPMELYSPSFLPAVLKALDSDKPVLATIHERESSSGRLRGILERGDVKLYTVTLQNRDLLPPQLAREIASLVAR</sequence>
<accession>A1RYX5</accession>
<gene>
    <name type="ordered locus">Tpen_1005</name>
</gene>
<dbReference type="EC" id="3.6.1.15" evidence="1"/>
<dbReference type="EMBL" id="CP000505">
    <property type="protein sequence ID" value="ABL78405.1"/>
    <property type="molecule type" value="Genomic_DNA"/>
</dbReference>
<dbReference type="RefSeq" id="WP_011752670.1">
    <property type="nucleotide sequence ID" value="NC_008698.1"/>
</dbReference>
<dbReference type="SMR" id="A1RYX5"/>
<dbReference type="STRING" id="368408.Tpen_1005"/>
<dbReference type="EnsemblBacteria" id="ABL78405">
    <property type="protein sequence ID" value="ABL78405"/>
    <property type="gene ID" value="Tpen_1005"/>
</dbReference>
<dbReference type="GeneID" id="4601561"/>
<dbReference type="KEGG" id="tpe:Tpen_1005"/>
<dbReference type="eggNOG" id="arCOG01034">
    <property type="taxonomic scope" value="Archaea"/>
</dbReference>
<dbReference type="HOGENOM" id="CLU_103145_1_1_2"/>
<dbReference type="Proteomes" id="UP000000641">
    <property type="component" value="Chromosome"/>
</dbReference>
<dbReference type="GO" id="GO:0005524">
    <property type="term" value="F:ATP binding"/>
    <property type="evidence" value="ECO:0007669"/>
    <property type="project" value="UniProtKB-UniRule"/>
</dbReference>
<dbReference type="GO" id="GO:0016887">
    <property type="term" value="F:ATP hydrolysis activity"/>
    <property type="evidence" value="ECO:0007669"/>
    <property type="project" value="InterPro"/>
</dbReference>
<dbReference type="CDD" id="cd19482">
    <property type="entry name" value="RecA-like_Thep1"/>
    <property type="match status" value="1"/>
</dbReference>
<dbReference type="Gene3D" id="3.40.50.300">
    <property type="entry name" value="P-loop containing nucleotide triphosphate hydrolases"/>
    <property type="match status" value="1"/>
</dbReference>
<dbReference type="HAMAP" id="MF_00796">
    <property type="entry name" value="NTPase_1"/>
    <property type="match status" value="1"/>
</dbReference>
<dbReference type="InterPro" id="IPR003593">
    <property type="entry name" value="AAA+_ATPase"/>
</dbReference>
<dbReference type="InterPro" id="IPR004948">
    <property type="entry name" value="Nuc-triphosphatase_THEP1"/>
</dbReference>
<dbReference type="InterPro" id="IPR027417">
    <property type="entry name" value="P-loop_NTPase"/>
</dbReference>
<dbReference type="NCBIfam" id="NF010248">
    <property type="entry name" value="PRK13695.1"/>
    <property type="match status" value="1"/>
</dbReference>
<dbReference type="PANTHER" id="PTHR43146">
    <property type="entry name" value="CANCER-RELATED NUCLEOSIDE-TRIPHOSPHATASE"/>
    <property type="match status" value="1"/>
</dbReference>
<dbReference type="PANTHER" id="PTHR43146:SF1">
    <property type="entry name" value="CANCER-RELATED NUCLEOSIDE-TRIPHOSPHATASE"/>
    <property type="match status" value="1"/>
</dbReference>
<dbReference type="Pfam" id="PF03266">
    <property type="entry name" value="NTPase_1"/>
    <property type="match status" value="1"/>
</dbReference>
<dbReference type="SMART" id="SM00382">
    <property type="entry name" value="AAA"/>
    <property type="match status" value="1"/>
</dbReference>
<dbReference type="SUPFAM" id="SSF52540">
    <property type="entry name" value="P-loop containing nucleoside triphosphate hydrolases"/>
    <property type="match status" value="1"/>
</dbReference>
<feature type="chain" id="PRO_0000360030" description="Nucleoside-triphosphatase THEP1">
    <location>
        <begin position="1"/>
        <end position="182"/>
    </location>
</feature>
<feature type="binding site" evidence="1">
    <location>
        <begin position="10"/>
        <end position="17"/>
    </location>
    <ligand>
        <name>ATP</name>
        <dbReference type="ChEBI" id="CHEBI:30616"/>
    </ligand>
</feature>
<feature type="binding site" evidence="1">
    <location>
        <begin position="102"/>
        <end position="109"/>
    </location>
    <ligand>
        <name>ATP</name>
        <dbReference type="ChEBI" id="CHEBI:30616"/>
    </ligand>
</feature>
<name>NTPTH_THEPD</name>
<evidence type="ECO:0000255" key="1">
    <source>
        <dbReference type="HAMAP-Rule" id="MF_00796"/>
    </source>
</evidence>